<name>TRMD_ECOL6</name>
<comment type="function">
    <text evidence="1">Specifically methylates guanosine-37 in various tRNAs.</text>
</comment>
<comment type="catalytic activity">
    <reaction>
        <text>guanosine(37) in tRNA + S-adenosyl-L-methionine = N(1)-methylguanosine(37) in tRNA + S-adenosyl-L-homocysteine + H(+)</text>
        <dbReference type="Rhea" id="RHEA:36899"/>
        <dbReference type="Rhea" id="RHEA-COMP:10145"/>
        <dbReference type="Rhea" id="RHEA-COMP:10147"/>
        <dbReference type="ChEBI" id="CHEBI:15378"/>
        <dbReference type="ChEBI" id="CHEBI:57856"/>
        <dbReference type="ChEBI" id="CHEBI:59789"/>
        <dbReference type="ChEBI" id="CHEBI:73542"/>
        <dbReference type="ChEBI" id="CHEBI:74269"/>
        <dbReference type="EC" id="2.1.1.228"/>
    </reaction>
</comment>
<comment type="subunit">
    <text evidence="1">Homodimer.</text>
</comment>
<comment type="subcellular location">
    <subcellularLocation>
        <location evidence="2">Cytoplasm</location>
    </subcellularLocation>
</comment>
<comment type="similarity">
    <text evidence="2">Belongs to the RNA methyltransferase TrmD family.</text>
</comment>
<accession>P0A874</accession>
<accession>P07020</accession>
<feature type="chain" id="PRO_0000060377" description="tRNA (guanine-N(1)-)-methyltransferase">
    <location>
        <begin position="1"/>
        <end position="255"/>
    </location>
</feature>
<feature type="binding site" evidence="1">
    <location>
        <position position="113"/>
    </location>
    <ligand>
        <name>S-adenosyl-L-methionine</name>
        <dbReference type="ChEBI" id="CHEBI:59789"/>
    </ligand>
</feature>
<feature type="binding site" evidence="1">
    <location>
        <begin position="133"/>
        <end position="138"/>
    </location>
    <ligand>
        <name>S-adenosyl-L-methionine</name>
        <dbReference type="ChEBI" id="CHEBI:59789"/>
    </ligand>
</feature>
<sequence>MWIGIISLFPEMFRAITDYGVTGRAVKNGLLSIQSWSPRDFTHDRHRTVDDRPYGGGPGMLMMVQPLRDAIHAAKAAAGEGAKVIYLSPQGRKLDQAGVSELATNQKLILVCGRYEGIDERVIQTEIDEEWSIGDYVLSGGELPAMTLIDSVSRFIPGVLGHEASATEDSFAEGLLDCPHYTRPEVLEGMEVPPVLLSGNHAEIRRWRLKQSLGRTWLRRPELLENLALTEEQARLLAEFKTEHAQQQHKHDGMA</sequence>
<dbReference type="EC" id="2.1.1.228"/>
<dbReference type="EMBL" id="AE014075">
    <property type="protein sequence ID" value="AAN81578.1"/>
    <property type="molecule type" value="Genomic_DNA"/>
</dbReference>
<dbReference type="RefSeq" id="WP_000264777.1">
    <property type="nucleotide sequence ID" value="NZ_CP051263.1"/>
</dbReference>
<dbReference type="SMR" id="P0A874"/>
<dbReference type="STRING" id="199310.c3128"/>
<dbReference type="GeneID" id="93774457"/>
<dbReference type="KEGG" id="ecc:c3128"/>
<dbReference type="eggNOG" id="COG0336">
    <property type="taxonomic scope" value="Bacteria"/>
</dbReference>
<dbReference type="HOGENOM" id="CLU_047363_0_1_6"/>
<dbReference type="BioCyc" id="ECOL199310:C3128-MONOMER"/>
<dbReference type="Proteomes" id="UP000001410">
    <property type="component" value="Chromosome"/>
</dbReference>
<dbReference type="GO" id="GO:0005829">
    <property type="term" value="C:cytosol"/>
    <property type="evidence" value="ECO:0007669"/>
    <property type="project" value="TreeGrafter"/>
</dbReference>
<dbReference type="GO" id="GO:0052906">
    <property type="term" value="F:tRNA (guanine(37)-N1)-methyltransferase activity"/>
    <property type="evidence" value="ECO:0007669"/>
    <property type="project" value="UniProtKB-UniRule"/>
</dbReference>
<dbReference type="GO" id="GO:0002939">
    <property type="term" value="P:tRNA N1-guanine methylation"/>
    <property type="evidence" value="ECO:0007669"/>
    <property type="project" value="TreeGrafter"/>
</dbReference>
<dbReference type="CDD" id="cd18080">
    <property type="entry name" value="TrmD-like"/>
    <property type="match status" value="1"/>
</dbReference>
<dbReference type="FunFam" id="1.10.1270.20:FF:000001">
    <property type="entry name" value="tRNA (guanine-N(1)-)-methyltransferase"/>
    <property type="match status" value="1"/>
</dbReference>
<dbReference type="FunFam" id="3.40.1280.10:FF:000001">
    <property type="entry name" value="tRNA (guanine-N(1)-)-methyltransferase"/>
    <property type="match status" value="1"/>
</dbReference>
<dbReference type="Gene3D" id="3.40.1280.10">
    <property type="match status" value="1"/>
</dbReference>
<dbReference type="Gene3D" id="1.10.1270.20">
    <property type="entry name" value="tRNA(m1g37)methyltransferase, domain 2"/>
    <property type="match status" value="1"/>
</dbReference>
<dbReference type="HAMAP" id="MF_00605">
    <property type="entry name" value="TrmD"/>
    <property type="match status" value="1"/>
</dbReference>
<dbReference type="InterPro" id="IPR029028">
    <property type="entry name" value="Alpha/beta_knot_MTases"/>
</dbReference>
<dbReference type="InterPro" id="IPR023148">
    <property type="entry name" value="tRNA_m1G_MeTrfase_C_sf"/>
</dbReference>
<dbReference type="InterPro" id="IPR002649">
    <property type="entry name" value="tRNA_m1G_MeTrfase_TrmD"/>
</dbReference>
<dbReference type="InterPro" id="IPR029026">
    <property type="entry name" value="tRNA_m1G_MTases_N"/>
</dbReference>
<dbReference type="InterPro" id="IPR016009">
    <property type="entry name" value="tRNA_MeTrfase_TRMD/TRM10"/>
</dbReference>
<dbReference type="NCBIfam" id="NF000648">
    <property type="entry name" value="PRK00026.1"/>
    <property type="match status" value="1"/>
</dbReference>
<dbReference type="NCBIfam" id="TIGR00088">
    <property type="entry name" value="trmD"/>
    <property type="match status" value="1"/>
</dbReference>
<dbReference type="PANTHER" id="PTHR46417">
    <property type="entry name" value="TRNA (GUANINE-N(1)-)-METHYLTRANSFERASE"/>
    <property type="match status" value="1"/>
</dbReference>
<dbReference type="PANTHER" id="PTHR46417:SF1">
    <property type="entry name" value="TRNA (GUANINE-N(1)-)-METHYLTRANSFERASE"/>
    <property type="match status" value="1"/>
</dbReference>
<dbReference type="Pfam" id="PF01746">
    <property type="entry name" value="tRNA_m1G_MT"/>
    <property type="match status" value="1"/>
</dbReference>
<dbReference type="PIRSF" id="PIRSF000386">
    <property type="entry name" value="tRNA_mtase"/>
    <property type="match status" value="1"/>
</dbReference>
<dbReference type="SUPFAM" id="SSF75217">
    <property type="entry name" value="alpha/beta knot"/>
    <property type="match status" value="1"/>
</dbReference>
<protein>
    <recommendedName>
        <fullName>tRNA (guanine-N(1)-)-methyltransferase</fullName>
        <ecNumber>2.1.1.228</ecNumber>
    </recommendedName>
    <alternativeName>
        <fullName>M1G-methyltransferase</fullName>
    </alternativeName>
    <alternativeName>
        <fullName>tRNA [GM37] methyltransferase</fullName>
    </alternativeName>
</protein>
<evidence type="ECO:0000250" key="1"/>
<evidence type="ECO:0000305" key="2"/>
<keyword id="KW-0963">Cytoplasm</keyword>
<keyword id="KW-0489">Methyltransferase</keyword>
<keyword id="KW-1185">Reference proteome</keyword>
<keyword id="KW-0949">S-adenosyl-L-methionine</keyword>
<keyword id="KW-0808">Transferase</keyword>
<keyword id="KW-0819">tRNA processing</keyword>
<organism>
    <name type="scientific">Escherichia coli O6:H1 (strain CFT073 / ATCC 700928 / UPEC)</name>
    <dbReference type="NCBI Taxonomy" id="199310"/>
    <lineage>
        <taxon>Bacteria</taxon>
        <taxon>Pseudomonadati</taxon>
        <taxon>Pseudomonadota</taxon>
        <taxon>Gammaproteobacteria</taxon>
        <taxon>Enterobacterales</taxon>
        <taxon>Enterobacteriaceae</taxon>
        <taxon>Escherichia</taxon>
    </lineage>
</organism>
<gene>
    <name type="primary">trmD</name>
    <name type="ordered locus">c3128</name>
</gene>
<reference key="1">
    <citation type="journal article" date="2002" name="Proc. Natl. Acad. Sci. U.S.A.">
        <title>Extensive mosaic structure revealed by the complete genome sequence of uropathogenic Escherichia coli.</title>
        <authorList>
            <person name="Welch R.A."/>
            <person name="Burland V."/>
            <person name="Plunkett G. III"/>
            <person name="Redford P."/>
            <person name="Roesch P."/>
            <person name="Rasko D."/>
            <person name="Buckles E.L."/>
            <person name="Liou S.-R."/>
            <person name="Boutin A."/>
            <person name="Hackett J."/>
            <person name="Stroud D."/>
            <person name="Mayhew G.F."/>
            <person name="Rose D.J."/>
            <person name="Zhou S."/>
            <person name="Schwartz D.C."/>
            <person name="Perna N.T."/>
            <person name="Mobley H.L.T."/>
            <person name="Donnenberg M.S."/>
            <person name="Blattner F.R."/>
        </authorList>
    </citation>
    <scope>NUCLEOTIDE SEQUENCE [LARGE SCALE GENOMIC DNA]</scope>
    <source>
        <strain>CFT073 / ATCC 700928 / UPEC</strain>
    </source>
</reference>
<proteinExistence type="inferred from homology"/>